<evidence type="ECO:0000250" key="1"/>
<evidence type="ECO:0000255" key="2">
    <source>
        <dbReference type="HAMAP-Rule" id="MF_00610"/>
    </source>
</evidence>
<reference key="1">
    <citation type="journal article" date="2006" name="Mol. Genet. Genomics">
        <title>The chloroplast genome of Nicotiana sylvestris and Nicotiana tomentosiformis: complete sequencing confirms that the Nicotiana sylvestris progenitor is the maternal genome donor of Nicotiana tabacum.</title>
        <authorList>
            <person name="Yukawa M."/>
            <person name="Tsudzuki T."/>
            <person name="Sugiura M."/>
        </authorList>
    </citation>
    <scope>NUCLEOTIDE SEQUENCE [LARGE SCALE GENOMIC DNA]</scope>
</reference>
<comment type="function">
    <text evidence="2">Component of the cytochrome b6-f complex, which mediates electron transfer between photosystem II (PSII) and photosystem I (PSI), cyclic electron flow around PSI, and state transitions.</text>
</comment>
<comment type="cofactor">
    <cofactor evidence="2">
        <name>heme</name>
        <dbReference type="ChEBI" id="CHEBI:30413"/>
    </cofactor>
    <text evidence="2">Binds 1 heme group covalently.</text>
</comment>
<comment type="subunit">
    <text evidence="1">The 4 large subunits of the cytochrome b6-f complex are cytochrome b6, subunit IV (17 kDa polypeptide, petD), cytochrome f and the Rieske protein, while the 4 small subunits are PetG, PetL, PetM and PetN. The complex functions as a dimer (By similarity).</text>
</comment>
<comment type="subcellular location">
    <subcellularLocation>
        <location evidence="2">Plastid</location>
        <location evidence="2">Chloroplast thylakoid membrane</location>
        <topology evidence="2">Single-pass membrane protein</topology>
    </subcellularLocation>
</comment>
<comment type="similarity">
    <text evidence="2">Belongs to the cytochrome f family.</text>
</comment>
<gene>
    <name evidence="2" type="primary">petA</name>
</gene>
<protein>
    <recommendedName>
        <fullName evidence="2">Cytochrome f</fullName>
    </recommendedName>
</protein>
<geneLocation type="chloroplast"/>
<sequence length="320" mass="35246">MQTRNAFSWLKKQITRSISVSLMIYILTRTSISSAYPIFAQQGYENPREATGRIVCANCHLANKPVEIEVPQAVLPDTVFEAVVRIPYDMQLKQVLANGKRGGLNVGAVLILPEGFELAPPDRISPEMKEKIGNLSFQSYRPNKKNILVIGPVPGQKYSEITFPILSPDPATKKDVHFLKYPIYVGGNRGRGQIYPDGSKSNNTVYNATAAGIVSKIIRKEKGGYEITITDASDGRQVVDIIPPGPELLVSEGESIKFDQPLTSNPNVGGFGQGDAEIVLQDPLRVQGLLFFLASVILAQIFLVLKKKQFEKVQLAEMNF</sequence>
<accession>Q3C1I8</accession>
<organism>
    <name type="scientific">Nicotiana sylvestris</name>
    <name type="common">Wood tobacco</name>
    <name type="synonym">South American tobacco</name>
    <dbReference type="NCBI Taxonomy" id="4096"/>
    <lineage>
        <taxon>Eukaryota</taxon>
        <taxon>Viridiplantae</taxon>
        <taxon>Streptophyta</taxon>
        <taxon>Embryophyta</taxon>
        <taxon>Tracheophyta</taxon>
        <taxon>Spermatophyta</taxon>
        <taxon>Magnoliopsida</taxon>
        <taxon>eudicotyledons</taxon>
        <taxon>Gunneridae</taxon>
        <taxon>Pentapetalae</taxon>
        <taxon>asterids</taxon>
        <taxon>lamiids</taxon>
        <taxon>Solanales</taxon>
        <taxon>Solanaceae</taxon>
        <taxon>Nicotianoideae</taxon>
        <taxon>Nicotianeae</taxon>
        <taxon>Nicotiana</taxon>
    </lineage>
</organism>
<dbReference type="EMBL" id="AB237912">
    <property type="protein sequence ID" value="BAE46665.1"/>
    <property type="molecule type" value="Genomic_DNA"/>
</dbReference>
<dbReference type="RefSeq" id="YP_358690.1">
    <property type="nucleotide sequence ID" value="NC_007500.1"/>
</dbReference>
<dbReference type="SMR" id="Q3C1I8"/>
<dbReference type="GeneID" id="3735070"/>
<dbReference type="KEGG" id="nsy:3735070"/>
<dbReference type="OrthoDB" id="26820at4085"/>
<dbReference type="Proteomes" id="UP000189701">
    <property type="component" value="Chloroplast Pltd"/>
</dbReference>
<dbReference type="GO" id="GO:0009535">
    <property type="term" value="C:chloroplast thylakoid membrane"/>
    <property type="evidence" value="ECO:0007669"/>
    <property type="project" value="UniProtKB-SubCell"/>
</dbReference>
<dbReference type="GO" id="GO:0009055">
    <property type="term" value="F:electron transfer activity"/>
    <property type="evidence" value="ECO:0007669"/>
    <property type="project" value="UniProtKB-UniRule"/>
</dbReference>
<dbReference type="GO" id="GO:0020037">
    <property type="term" value="F:heme binding"/>
    <property type="evidence" value="ECO:0007669"/>
    <property type="project" value="InterPro"/>
</dbReference>
<dbReference type="GO" id="GO:0005506">
    <property type="term" value="F:iron ion binding"/>
    <property type="evidence" value="ECO:0007669"/>
    <property type="project" value="InterPro"/>
</dbReference>
<dbReference type="GO" id="GO:0015979">
    <property type="term" value="P:photosynthesis"/>
    <property type="evidence" value="ECO:0007669"/>
    <property type="project" value="UniProtKB-UniRule"/>
</dbReference>
<dbReference type="FunFam" id="1.20.5.700:FF:000001">
    <property type="entry name" value="Cytochrome f"/>
    <property type="match status" value="1"/>
</dbReference>
<dbReference type="FunFam" id="2.40.50.100:FF:000007">
    <property type="entry name" value="Cytochrome f"/>
    <property type="match status" value="1"/>
</dbReference>
<dbReference type="FunFam" id="2.60.40.830:FF:000001">
    <property type="entry name" value="Cytochrome f"/>
    <property type="match status" value="1"/>
</dbReference>
<dbReference type="Gene3D" id="2.40.50.100">
    <property type="match status" value="1"/>
</dbReference>
<dbReference type="Gene3D" id="2.60.40.830">
    <property type="entry name" value="Cytochrome f large domain"/>
    <property type="match status" value="1"/>
</dbReference>
<dbReference type="Gene3D" id="1.20.5.700">
    <property type="entry name" value="Single helix bin"/>
    <property type="match status" value="1"/>
</dbReference>
<dbReference type="HAMAP" id="MF_00610">
    <property type="entry name" value="Cytb6_f_cytF"/>
    <property type="match status" value="1"/>
</dbReference>
<dbReference type="InterPro" id="IPR024058">
    <property type="entry name" value="Cyt-f_TM"/>
</dbReference>
<dbReference type="InterPro" id="IPR002325">
    <property type="entry name" value="Cyt_f"/>
</dbReference>
<dbReference type="InterPro" id="IPR024094">
    <property type="entry name" value="Cyt_f_lg_dom"/>
</dbReference>
<dbReference type="InterPro" id="IPR036826">
    <property type="entry name" value="Cyt_f_lg_dom_sf"/>
</dbReference>
<dbReference type="InterPro" id="IPR011054">
    <property type="entry name" value="Rudment_hybrid_motif"/>
</dbReference>
<dbReference type="PANTHER" id="PTHR33288">
    <property type="match status" value="1"/>
</dbReference>
<dbReference type="PANTHER" id="PTHR33288:SF10">
    <property type="entry name" value="CYTOCHROME F"/>
    <property type="match status" value="1"/>
</dbReference>
<dbReference type="Pfam" id="PF01333">
    <property type="entry name" value="Apocytochr_F_C"/>
    <property type="match status" value="1"/>
</dbReference>
<dbReference type="Pfam" id="PF16639">
    <property type="entry name" value="Apocytochr_F_N"/>
    <property type="match status" value="1"/>
</dbReference>
<dbReference type="PRINTS" id="PR00610">
    <property type="entry name" value="CYTOCHROMEF"/>
</dbReference>
<dbReference type="SUPFAM" id="SSF103431">
    <property type="entry name" value="Cytochrome f subunit of the cytochrome b6f complex, transmembrane anchor"/>
    <property type="match status" value="1"/>
</dbReference>
<dbReference type="SUPFAM" id="SSF49441">
    <property type="entry name" value="Cytochrome f, large domain"/>
    <property type="match status" value="1"/>
</dbReference>
<dbReference type="SUPFAM" id="SSF51246">
    <property type="entry name" value="Rudiment single hybrid motif"/>
    <property type="match status" value="1"/>
</dbReference>
<dbReference type="PROSITE" id="PS51010">
    <property type="entry name" value="CYTF"/>
    <property type="match status" value="1"/>
</dbReference>
<name>CYF_NICSY</name>
<proteinExistence type="inferred from homology"/>
<keyword id="KW-0150">Chloroplast</keyword>
<keyword id="KW-0249">Electron transport</keyword>
<keyword id="KW-0349">Heme</keyword>
<keyword id="KW-0408">Iron</keyword>
<keyword id="KW-0472">Membrane</keyword>
<keyword id="KW-0479">Metal-binding</keyword>
<keyword id="KW-0602">Photosynthesis</keyword>
<keyword id="KW-0934">Plastid</keyword>
<keyword id="KW-1185">Reference proteome</keyword>
<keyword id="KW-0732">Signal</keyword>
<keyword id="KW-0793">Thylakoid</keyword>
<keyword id="KW-0812">Transmembrane</keyword>
<keyword id="KW-1133">Transmembrane helix</keyword>
<keyword id="KW-0813">Transport</keyword>
<feature type="signal peptide" evidence="2">
    <location>
        <begin position="1"/>
        <end position="35"/>
    </location>
</feature>
<feature type="chain" id="PRO_0000275429" description="Cytochrome f">
    <location>
        <begin position="36"/>
        <end position="320"/>
    </location>
</feature>
<feature type="transmembrane region" description="Helical" evidence="2">
    <location>
        <begin position="286"/>
        <end position="306"/>
    </location>
</feature>
<feature type="binding site" description="axial binding residue" evidence="2">
    <location>
        <position position="36"/>
    </location>
    <ligand>
        <name>heme</name>
        <dbReference type="ChEBI" id="CHEBI:30413"/>
    </ligand>
    <ligandPart>
        <name>Fe</name>
        <dbReference type="ChEBI" id="CHEBI:18248"/>
    </ligandPart>
</feature>
<feature type="binding site" description="covalent" evidence="2">
    <location>
        <position position="56"/>
    </location>
    <ligand>
        <name>heme</name>
        <dbReference type="ChEBI" id="CHEBI:30413"/>
    </ligand>
</feature>
<feature type="binding site" description="covalent" evidence="2">
    <location>
        <position position="59"/>
    </location>
    <ligand>
        <name>heme</name>
        <dbReference type="ChEBI" id="CHEBI:30413"/>
    </ligand>
</feature>
<feature type="binding site" description="axial binding residue" evidence="2">
    <location>
        <position position="60"/>
    </location>
    <ligand>
        <name>heme</name>
        <dbReference type="ChEBI" id="CHEBI:30413"/>
    </ligand>
    <ligandPart>
        <name>Fe</name>
        <dbReference type="ChEBI" id="CHEBI:18248"/>
    </ligandPart>
</feature>